<protein>
    <recommendedName>
        <fullName evidence="1">Maturase K</fullName>
    </recommendedName>
    <alternativeName>
        <fullName evidence="1">Intron maturase</fullName>
    </alternativeName>
</protein>
<organism>
    <name type="scientific">Trillium grandiflorum</name>
    <name type="common">Large-flowered trillium</name>
    <name type="synonym">Trillium rhomboideum var. grandiflorum</name>
    <dbReference type="NCBI Taxonomy" id="55186"/>
    <lineage>
        <taxon>Eukaryota</taxon>
        <taxon>Viridiplantae</taxon>
        <taxon>Streptophyta</taxon>
        <taxon>Embryophyta</taxon>
        <taxon>Tracheophyta</taxon>
        <taxon>Spermatophyta</taxon>
        <taxon>Magnoliopsida</taxon>
        <taxon>Liliopsida</taxon>
        <taxon>Liliales</taxon>
        <taxon>Melanthiaceae</taxon>
        <taxon>Trillium</taxon>
    </lineage>
</organism>
<comment type="function">
    <text evidence="1">Usually encoded in the trnK tRNA gene intron. Probably assists in splicing its own and other chloroplast group II introns.</text>
</comment>
<comment type="subcellular location">
    <subcellularLocation>
        <location>Plastid</location>
        <location>Chloroplast</location>
    </subcellularLocation>
</comment>
<comment type="similarity">
    <text evidence="1">Belongs to the intron maturase 2 family. MatK subfamily.</text>
</comment>
<reference key="1">
    <citation type="journal article" date="1999" name="J. Plant Res.">
        <title>Molecular systematics of Trilliaceae I. Phylogenetic analyses of Trillium using matK gene sequences.</title>
        <authorList>
            <person name="Kazempour Osaloo S."/>
            <person name="Utech F.H."/>
            <person name="Ohara M."/>
            <person name="Kawano S."/>
        </authorList>
    </citation>
    <scope>NUCLEOTIDE SEQUENCE [GENOMIC DNA]</scope>
    <source>
        <tissue>Leaf</tissue>
    </source>
</reference>
<dbReference type="EMBL" id="AB017392">
    <property type="protein sequence ID" value="BAA36808.1"/>
    <property type="molecule type" value="Genomic_DNA"/>
</dbReference>
<dbReference type="GO" id="GO:0009507">
    <property type="term" value="C:chloroplast"/>
    <property type="evidence" value="ECO:0007669"/>
    <property type="project" value="UniProtKB-SubCell"/>
</dbReference>
<dbReference type="GO" id="GO:0003723">
    <property type="term" value="F:RNA binding"/>
    <property type="evidence" value="ECO:0007669"/>
    <property type="project" value="UniProtKB-KW"/>
</dbReference>
<dbReference type="GO" id="GO:0006397">
    <property type="term" value="P:mRNA processing"/>
    <property type="evidence" value="ECO:0007669"/>
    <property type="project" value="UniProtKB-KW"/>
</dbReference>
<dbReference type="GO" id="GO:0008380">
    <property type="term" value="P:RNA splicing"/>
    <property type="evidence" value="ECO:0007669"/>
    <property type="project" value="UniProtKB-UniRule"/>
</dbReference>
<dbReference type="GO" id="GO:0008033">
    <property type="term" value="P:tRNA processing"/>
    <property type="evidence" value="ECO:0007669"/>
    <property type="project" value="UniProtKB-KW"/>
</dbReference>
<dbReference type="HAMAP" id="MF_01390">
    <property type="entry name" value="MatK"/>
    <property type="match status" value="1"/>
</dbReference>
<dbReference type="InterPro" id="IPR024937">
    <property type="entry name" value="Domain_X"/>
</dbReference>
<dbReference type="InterPro" id="IPR002866">
    <property type="entry name" value="Maturase_MatK"/>
</dbReference>
<dbReference type="InterPro" id="IPR024942">
    <property type="entry name" value="Maturase_MatK_N"/>
</dbReference>
<dbReference type="PANTHER" id="PTHR34811">
    <property type="entry name" value="MATURASE K"/>
    <property type="match status" value="1"/>
</dbReference>
<dbReference type="PANTHER" id="PTHR34811:SF1">
    <property type="entry name" value="MATURASE K"/>
    <property type="match status" value="1"/>
</dbReference>
<dbReference type="Pfam" id="PF01348">
    <property type="entry name" value="Intron_maturas2"/>
    <property type="match status" value="1"/>
</dbReference>
<dbReference type="Pfam" id="PF01824">
    <property type="entry name" value="MatK_N"/>
    <property type="match status" value="1"/>
</dbReference>
<evidence type="ECO:0000255" key="1">
    <source>
        <dbReference type="HAMAP-Rule" id="MF_01390"/>
    </source>
</evidence>
<gene>
    <name evidence="1" type="primary">matK</name>
</gene>
<name>MATK_TRIGN</name>
<accession>Q7JEV7</accession>
<geneLocation type="chloroplast"/>
<sequence length="517" mass="61469">MEELQLQGYLEKDGSRQQNFLYPLIFQEYIYTLAHDHGLNSSIFDEPMEIVGLGYDNKSSSVLVKRLITRMYQQNSLIYSMNDFNQNRFVGHNNSFYSNFDSKMVSEGFAVIVEIPFSLRLVPSSEEIPKSQNLRSIHSIFPFLEDKLSYLNYVLDILIPYPIHLEILVQILQCWIQDVPSLHFLRLFLHEFHNWNNLITPTKSISVFSKENKRLFRILYNSYVSEYEFVFVFLRKQSYYLRSTSSRAFLERTHFYVKIEHLIDVCHNHFQKILWFFKDSFMHYVRYKGKAILASRGTYLLIKKWKCYLVNFWQYHFHFWSKPYRIHINPFSNYSFYFLGYISSVRINPSAVKNQMLENFYLVDTLTQKFDTIVPVIPLIGSLSKAKFCTILGHPISKPIWAELSDSDIIDRFGRICRNLSHYHSGSSKKQSLYRIKYILRLSCARTLARKHKSTVRNLLQRLGSGLLEEFFTEEEQVISPIFPKTTLFPLHGSHKERIWYLNIIRINDLANYLDWS</sequence>
<keyword id="KW-0150">Chloroplast</keyword>
<keyword id="KW-0507">mRNA processing</keyword>
<keyword id="KW-0934">Plastid</keyword>
<keyword id="KW-0694">RNA-binding</keyword>
<keyword id="KW-0819">tRNA processing</keyword>
<proteinExistence type="inferred from homology"/>
<feature type="chain" id="PRO_0000143765" description="Maturase K">
    <location>
        <begin position="1"/>
        <end position="517"/>
    </location>
</feature>